<protein>
    <recommendedName>
        <fullName evidence="8">Fanconi anemia group J protein homolog</fullName>
        <ecNumber evidence="2">5.6.2.3</ecNumber>
    </recommendedName>
    <alternativeName>
        <fullName>BRCA1-interacting protein C-terminal helicase homolog 1.L</fullName>
        <shortName>BRCA1-interacting protein homolog 1.L</shortName>
    </alternativeName>
    <alternativeName>
        <fullName evidence="8">DNA 5'-3' helicase FANCJ</fullName>
    </alternativeName>
</protein>
<evidence type="ECO:0000250" key="1">
    <source>
        <dbReference type="UniProtKB" id="Q4JC68"/>
    </source>
</evidence>
<evidence type="ECO:0000250" key="2">
    <source>
        <dbReference type="UniProtKB" id="Q9BX63"/>
    </source>
</evidence>
<evidence type="ECO:0000255" key="3"/>
<evidence type="ECO:0000255" key="4">
    <source>
        <dbReference type="PROSITE-ProRule" id="PRU00541"/>
    </source>
</evidence>
<evidence type="ECO:0000256" key="5">
    <source>
        <dbReference type="SAM" id="MobiDB-lite"/>
    </source>
</evidence>
<evidence type="ECO:0000269" key="6">
    <source>
    </source>
</evidence>
<evidence type="ECO:0000303" key="7">
    <source>
    </source>
</evidence>
<evidence type="ECO:0000305" key="8"/>
<sequence>MSSVLSEYTIGGVKILFPCRAYPSQLAMMNSIMRGLNCKQHCLLESPTGSGKSLALLCSALAWQQSLYGKQLVDEKSDEKEWKKMERVTPCCCSCHLKNSDQTTFSSDRQMNSTDNAPSNISGASSNKTTLASKLCAKKQASFTTDQDDDFQTDRKRIRQSHDEQLQARKRRCYEKGVQFIDDDDDDDRDHVKFDSYNQRRASMDSCAEEAIAASSNHSAGPCSLCFCGQTKEEDKATEKCKKENGEKPKVPKIFFGTRTHKQIAQITRELRRTAYSSVRMTILSSREHTCVHPDIHSNRNERCKELLEAKDGHSCRFYHGVHKMNEQSLLQYRHGIDKAWDIEELVGLGKRLRACAYFAARELMQGADIVFCPYNYLLDSQIRESMEICLENQVVILDEAHNIEDCARESASFSCSDEQLMYARDEIDSMVNHGIRVSDHEPLRAVCYSLTNWIRQCSDQLVEREYEASCKVWNGKEILSIFHDMGITNATFPLLKVNLAAVVEKEEKITMFHGQENVIKIPTLSPQSQMVLKGLFLVLDYLFRQNNRFAEDYRVALQQSYTWTNRPDIPDENGFFARPRSRRSIRQKIMVYTLNFWCLNPAVAFSDLSSNARTIVLTSGTLSPMGSFSSELGVKFSIQLEANHVIHKSQVWVGTVGAGPKGRKLCATFQHTETFDFQDEIGALLLSVCQTVSHGILCFLPSYKMLEKLKDRWMHTGLWENLERIKTVIKEPQGGDKTDFDKLLQMYYDAIRYKGEKDGALLIAVCRGKVSEGLDFSDNNARAVVTVGIPFPNIKDLQVELKRKYNDQHAKNRGLLPGSQWYEIQAYRALNQALGRCIRHKNDWGALILVDDRFRSNPKYITGLSKWVRQLVQHHSTFNGALESLTEFSKNQQQRMQMSSTNCDDEPSQGTSSSSKNTSPTSSLLEFTVHPTQSVSEFTQPTSSTQSSVTSPPEIAIPFSPIQASLGGTAPRDNAEVLSHWKEEQRRKSNTSIKTNLMKSFEKSKSNYSKQRTSFYNYFKSNAHTSTPRQSSSKTRESNLEICCNELASGYSASANSGSLSQGFGRENNVSRKQDEGLNESCQEILCNAVPLFHCTNKETHASVSPPRKYVEPSVSMLPEDNTDTDITIHCTPELYDDDGQENLVSDEEDKCNEEKENKIDSGRADKDTNACALDTSVKRENLFHKEEYLNVSGNENAFNIGRNKGTEQKNRENRLSRSRNKGVSSFFLD</sequence>
<proteinExistence type="inferred from homology"/>
<feature type="chain" id="PRO_0000459741" description="Fanconi anemia group J protein homolog">
    <location>
        <begin position="1"/>
        <end position="1231"/>
    </location>
</feature>
<feature type="domain" description="Helicase ATP-binding" evidence="4">
    <location>
        <begin position="11"/>
        <end position="448"/>
    </location>
</feature>
<feature type="region of interest" description="Disordered" evidence="5">
    <location>
        <begin position="104"/>
        <end position="126"/>
    </location>
</feature>
<feature type="region of interest" description="Disordered" evidence="5">
    <location>
        <begin position="147"/>
        <end position="166"/>
    </location>
</feature>
<feature type="region of interest" description="Disordered" evidence="5">
    <location>
        <begin position="890"/>
        <end position="924"/>
    </location>
</feature>
<feature type="region of interest" description="Disordered" evidence="5">
    <location>
        <begin position="936"/>
        <end position="956"/>
    </location>
</feature>
<feature type="region of interest" description="Disordered" evidence="5">
    <location>
        <begin position="1195"/>
        <end position="1231"/>
    </location>
</feature>
<feature type="short sequence motif" description="Nuclear localization signal" evidence="3">
    <location>
        <begin position="155"/>
        <end position="173"/>
    </location>
</feature>
<feature type="short sequence motif" description="DEAH box" evidence="4">
    <location>
        <begin position="399"/>
        <end position="402"/>
    </location>
</feature>
<feature type="compositionally biased region" description="Basic and acidic residues" evidence="5">
    <location>
        <begin position="152"/>
        <end position="166"/>
    </location>
</feature>
<feature type="compositionally biased region" description="Polar residues" evidence="5">
    <location>
        <begin position="890"/>
        <end position="903"/>
    </location>
</feature>
<feature type="compositionally biased region" description="Low complexity" evidence="5">
    <location>
        <begin position="909"/>
        <end position="924"/>
    </location>
</feature>
<feature type="compositionally biased region" description="Low complexity" evidence="5">
    <location>
        <begin position="940"/>
        <end position="954"/>
    </location>
</feature>
<feature type="compositionally biased region" description="Basic and acidic residues" evidence="5">
    <location>
        <begin position="1206"/>
        <end position="1217"/>
    </location>
</feature>
<feature type="binding site" evidence="4">
    <location>
        <begin position="46"/>
        <end position="53"/>
    </location>
    <ligand>
        <name>ATP</name>
        <dbReference type="ChEBI" id="CHEBI:30616"/>
    </ligand>
</feature>
<feature type="binding site" evidence="1">
    <location>
        <position position="291"/>
    </location>
    <ligand>
        <name>[4Fe-4S] cluster</name>
        <dbReference type="ChEBI" id="CHEBI:49883"/>
    </ligand>
</feature>
<feature type="binding site" evidence="1">
    <location>
        <position position="304"/>
    </location>
    <ligand>
        <name>[4Fe-4S] cluster</name>
        <dbReference type="ChEBI" id="CHEBI:49883"/>
    </ligand>
</feature>
<feature type="binding site" evidence="1">
    <location>
        <position position="316"/>
    </location>
    <ligand>
        <name>[4Fe-4S] cluster</name>
        <dbReference type="ChEBI" id="CHEBI:49883"/>
    </ligand>
</feature>
<feature type="binding site" evidence="1">
    <location>
        <position position="356"/>
    </location>
    <ligand>
        <name>[4Fe-4S] cluster</name>
        <dbReference type="ChEBI" id="CHEBI:49883"/>
    </ligand>
</feature>
<reference key="1">
    <citation type="journal article" date="2016" name="Nature">
        <title>Genome evolution in the allotetraploid frog Xenopus laevis.</title>
        <authorList>
            <person name="Session A.M."/>
            <person name="Uno Y."/>
            <person name="Kwon T."/>
            <person name="Chapman J.A."/>
            <person name="Toyoda A."/>
            <person name="Takahashi S."/>
            <person name="Fukui A."/>
            <person name="Hikosaka A."/>
            <person name="Suzuki A."/>
            <person name="Kondo M."/>
            <person name="van Heeringen S.J."/>
            <person name="Quigley I."/>
            <person name="Heinz S."/>
            <person name="Ogino H."/>
            <person name="Ochi H."/>
            <person name="Hellsten U."/>
            <person name="Lyons J.B."/>
            <person name="Simakov O."/>
            <person name="Putnam N."/>
            <person name="Stites J."/>
            <person name="Kuroki Y."/>
            <person name="Tanaka T."/>
            <person name="Michiue T."/>
            <person name="Watanabe M."/>
            <person name="Bogdanovic O."/>
            <person name="Lister R."/>
            <person name="Georgiou G."/>
            <person name="Paranjpe S.S."/>
            <person name="van Kruijsbergen I."/>
            <person name="Shu S."/>
            <person name="Carlson J."/>
            <person name="Kinoshita T."/>
            <person name="Ohta Y."/>
            <person name="Mawaribuchi S."/>
            <person name="Jenkins J."/>
            <person name="Grimwood J."/>
            <person name="Schmutz J."/>
            <person name="Mitros T."/>
            <person name="Mozaffari S.V."/>
            <person name="Suzuki Y."/>
            <person name="Haramoto Y."/>
            <person name="Yamamoto T.S."/>
            <person name="Takagi C."/>
            <person name="Heald R."/>
            <person name="Miller K."/>
            <person name="Haudenschild C."/>
            <person name="Kitzman J."/>
            <person name="Nakayama T."/>
            <person name="Izutsu Y."/>
            <person name="Robert J."/>
            <person name="Fortriede J."/>
            <person name="Burns K."/>
            <person name="Lotay V."/>
            <person name="Karimi K."/>
            <person name="Yasuoka Y."/>
            <person name="Dichmann D.S."/>
            <person name="Flajnik M.F."/>
            <person name="Houston D.W."/>
            <person name="Shendure J."/>
            <person name="DuPasquier L."/>
            <person name="Vize P.D."/>
            <person name="Zorn A.M."/>
            <person name="Ito M."/>
            <person name="Marcotte E.M."/>
            <person name="Wallingford J.B."/>
            <person name="Ito Y."/>
            <person name="Asashima M."/>
            <person name="Ueno N."/>
            <person name="Matsuda Y."/>
            <person name="Veenstra G.J."/>
            <person name="Fujiyama A."/>
            <person name="Harland R.M."/>
            <person name="Taira M."/>
            <person name="Rokhsar D.S."/>
        </authorList>
    </citation>
    <scope>NUCLEOTIDE SEQUENCE [LARGE SCALE GENOMIC DNA]</scope>
    <source>
        <strain>J</strain>
    </source>
</reference>
<reference key="2">
    <citation type="journal article" date="2023" name="Mol. Cell">
        <title>The FANCJ helicase unfolds DNA-protein crosslinks to promote their repair.</title>
        <authorList>
            <person name="Yaneva D."/>
            <person name="Sparks J.L."/>
            <person name="Donsbach M."/>
            <person name="Zhao S."/>
            <person name="Weickert P."/>
            <person name="Bezalel-Buch R."/>
            <person name="Stingele J."/>
            <person name="Walter J.C."/>
        </authorList>
    </citation>
    <scope>FUNCTION</scope>
</reference>
<accession>A0A8J1M587</accession>
<accession>A0A1L8HG08</accession>
<accession>A0A8J1M586</accession>
<accession>A0A8J1M6B6</accession>
<accession>A0A974DQA8</accession>
<comment type="function">
    <text evidence="2 6">DNA-dependent helicase and 5' to 3' DNA helicase required for the maintenance of chromosomal stability (By similarity). Involved in the repair of DNA double-strand breaks by homologous recombination (By similarity). Involved in the repair of abasic sites at replication forks by promoting the degradation of DNA-protein cross-links: acts by catalyzing unfolding of HMCES DNA-protein cross-link via its helicase activity, exposing the underlying DNA and enabling cleavage of the DNA-protein adduct by the SPRTN metalloprotease (PubMed:36608669).</text>
</comment>
<comment type="catalytic activity">
    <reaction evidence="2">
        <text>Couples ATP hydrolysis with the unwinding of duplex DNA at the replication fork by translocating in the 5'-3' direction. This creates two antiparallel DNA single strands (ssDNA). The leading ssDNA polymer is the template for DNA polymerase III holoenzyme which synthesizes a continuous strand.</text>
        <dbReference type="EC" id="5.6.2.3"/>
    </reaction>
</comment>
<comment type="catalytic activity">
    <reaction evidence="2">
        <text>ATP + H2O = ADP + phosphate + H(+)</text>
        <dbReference type="Rhea" id="RHEA:13065"/>
        <dbReference type="ChEBI" id="CHEBI:15377"/>
        <dbReference type="ChEBI" id="CHEBI:15378"/>
        <dbReference type="ChEBI" id="CHEBI:30616"/>
        <dbReference type="ChEBI" id="CHEBI:43474"/>
        <dbReference type="ChEBI" id="CHEBI:456216"/>
        <dbReference type="EC" id="5.6.2.3"/>
    </reaction>
</comment>
<comment type="cofactor">
    <cofactor evidence="2">
        <name>[4Fe-4S] cluster</name>
        <dbReference type="ChEBI" id="CHEBI:49883"/>
    </cofactor>
    <text evidence="2">Binds 1 [4Fe-4S] cluster.</text>
</comment>
<comment type="subcellular location">
    <subcellularLocation>
        <location evidence="2">Nucleus</location>
    </subcellularLocation>
</comment>
<comment type="domain">
    <text evidence="2">4Fe-4S iron-sulfur-binding is required for helicase activity.</text>
</comment>
<comment type="similarity">
    <text evidence="8">Belongs to the DEAD box helicase family. DEAH subfamily.</text>
</comment>
<name>FANCJ_XENLA</name>
<keyword id="KW-0004">4Fe-4S</keyword>
<keyword id="KW-0067">ATP-binding</keyword>
<keyword id="KW-0227">DNA damage</keyword>
<keyword id="KW-0234">DNA repair</keyword>
<keyword id="KW-0347">Helicase</keyword>
<keyword id="KW-0378">Hydrolase</keyword>
<keyword id="KW-0408">Iron</keyword>
<keyword id="KW-0411">Iron-sulfur</keyword>
<keyword id="KW-0413">Isomerase</keyword>
<keyword id="KW-0479">Metal-binding</keyword>
<keyword id="KW-0547">Nucleotide-binding</keyword>
<keyword id="KW-0539">Nucleus</keyword>
<keyword id="KW-1185">Reference proteome</keyword>
<dbReference type="EC" id="5.6.2.3" evidence="2"/>
<dbReference type="EMBL" id="CM004468">
    <property type="protein sequence ID" value="OCT94971.1"/>
    <property type="molecule type" value="Genomic_DNA"/>
</dbReference>
<dbReference type="RefSeq" id="XP_018100397.1">
    <property type="nucleotide sequence ID" value="XM_018244908.2"/>
</dbReference>
<dbReference type="RefSeq" id="XP_018100398.1">
    <property type="nucleotide sequence ID" value="XM_018244909.2"/>
</dbReference>
<dbReference type="RefSeq" id="XP_018100399.1">
    <property type="nucleotide sequence ID" value="XM_018244910.1"/>
</dbReference>
<dbReference type="PaxDb" id="8355-A0A1L8HG08"/>
<dbReference type="GeneID" id="398837"/>
<dbReference type="AGR" id="Xenbase:XB-GENE-866151"/>
<dbReference type="CTD" id="398837"/>
<dbReference type="Xenbase" id="XB-GENE-866151">
    <property type="gene designation" value="brip1.L"/>
</dbReference>
<dbReference type="OMA" id="FSNDNAR"/>
<dbReference type="OrthoDB" id="19182at2759"/>
<dbReference type="Proteomes" id="UP000186698">
    <property type="component" value="Chromosome 2L"/>
</dbReference>
<dbReference type="Proteomes" id="UP000694892">
    <property type="component" value="Chromosome 2L"/>
</dbReference>
<dbReference type="Bgee" id="398837">
    <property type="expression patterns" value="Expressed in egg cell and 13 other cell types or tissues"/>
</dbReference>
<dbReference type="GO" id="GO:0005634">
    <property type="term" value="C:nucleus"/>
    <property type="evidence" value="ECO:0007669"/>
    <property type="project" value="UniProtKB-SubCell"/>
</dbReference>
<dbReference type="GO" id="GO:0051539">
    <property type="term" value="F:4 iron, 4 sulfur cluster binding"/>
    <property type="evidence" value="ECO:0007669"/>
    <property type="project" value="UniProtKB-KW"/>
</dbReference>
<dbReference type="GO" id="GO:0043139">
    <property type="term" value="F:5'-3' DNA helicase activity"/>
    <property type="evidence" value="ECO:0000250"/>
    <property type="project" value="UniProtKB"/>
</dbReference>
<dbReference type="GO" id="GO:0005524">
    <property type="term" value="F:ATP binding"/>
    <property type="evidence" value="ECO:0007669"/>
    <property type="project" value="UniProtKB-KW"/>
</dbReference>
<dbReference type="GO" id="GO:0003677">
    <property type="term" value="F:DNA binding"/>
    <property type="evidence" value="ECO:0007669"/>
    <property type="project" value="InterPro"/>
</dbReference>
<dbReference type="GO" id="GO:0016818">
    <property type="term" value="F:hydrolase activity, acting on acid anhydrides, in phosphorus-containing anhydrides"/>
    <property type="evidence" value="ECO:0007669"/>
    <property type="project" value="InterPro"/>
</dbReference>
<dbReference type="GO" id="GO:0046872">
    <property type="term" value="F:metal ion binding"/>
    <property type="evidence" value="ECO:0007669"/>
    <property type="project" value="UniProtKB-KW"/>
</dbReference>
<dbReference type="GO" id="GO:1990918">
    <property type="term" value="P:double-strand break repair involved in meiotic recombination"/>
    <property type="evidence" value="ECO:0007669"/>
    <property type="project" value="TreeGrafter"/>
</dbReference>
<dbReference type="GO" id="GO:0006289">
    <property type="term" value="P:nucleotide-excision repair"/>
    <property type="evidence" value="ECO:0007669"/>
    <property type="project" value="TreeGrafter"/>
</dbReference>
<dbReference type="GO" id="GO:0106300">
    <property type="term" value="P:protein-DNA covalent cross-linking repair"/>
    <property type="evidence" value="ECO:0000314"/>
    <property type="project" value="UniProtKB"/>
</dbReference>
<dbReference type="CDD" id="cd18788">
    <property type="entry name" value="SF2_C_XPD"/>
    <property type="match status" value="1"/>
</dbReference>
<dbReference type="FunFam" id="3.40.50.300:FF:000977">
    <property type="entry name" value="BRCA1 interacting protein C-terminal helicase 1"/>
    <property type="match status" value="1"/>
</dbReference>
<dbReference type="FunFam" id="3.40.50.300:FF:001680">
    <property type="entry name" value="BRCA1 interacting protein C-terminal helicase 1"/>
    <property type="match status" value="1"/>
</dbReference>
<dbReference type="FunFam" id="3.40.50.300:FF:000731">
    <property type="entry name" value="Fanconi anemia group J protein homolog"/>
    <property type="match status" value="1"/>
</dbReference>
<dbReference type="Gene3D" id="3.40.50.300">
    <property type="entry name" value="P-loop containing nucleotide triphosphate hydrolases"/>
    <property type="match status" value="3"/>
</dbReference>
<dbReference type="InterPro" id="IPR006555">
    <property type="entry name" value="ATP-dep_Helicase_C"/>
</dbReference>
<dbReference type="InterPro" id="IPR045028">
    <property type="entry name" value="DinG/Rad3-like"/>
</dbReference>
<dbReference type="InterPro" id="IPR014013">
    <property type="entry name" value="Helic_SF1/SF2_ATP-bd_DinG/Rad3"/>
</dbReference>
<dbReference type="InterPro" id="IPR006554">
    <property type="entry name" value="Helicase-like_DEXD_c2"/>
</dbReference>
<dbReference type="InterPro" id="IPR014001">
    <property type="entry name" value="Helicase_ATP-bd"/>
</dbReference>
<dbReference type="InterPro" id="IPR027417">
    <property type="entry name" value="P-loop_NTPase"/>
</dbReference>
<dbReference type="InterPro" id="IPR010614">
    <property type="entry name" value="RAD3-like_helicase_DEAD"/>
</dbReference>
<dbReference type="InterPro" id="IPR013020">
    <property type="entry name" value="Rad3/Chl1-like"/>
</dbReference>
<dbReference type="NCBIfam" id="TIGR00604">
    <property type="entry name" value="rad3"/>
    <property type="match status" value="1"/>
</dbReference>
<dbReference type="PANTHER" id="PTHR11472">
    <property type="entry name" value="DNA REPAIR DEAD HELICASE RAD3/XP-D SUBFAMILY MEMBER"/>
    <property type="match status" value="1"/>
</dbReference>
<dbReference type="PANTHER" id="PTHR11472:SF47">
    <property type="entry name" value="FANCONI ANEMIA GROUP J PROTEIN"/>
    <property type="match status" value="1"/>
</dbReference>
<dbReference type="Pfam" id="PF06733">
    <property type="entry name" value="DEAD_2"/>
    <property type="match status" value="1"/>
</dbReference>
<dbReference type="Pfam" id="PF13307">
    <property type="entry name" value="Helicase_C_2"/>
    <property type="match status" value="1"/>
</dbReference>
<dbReference type="SMART" id="SM00487">
    <property type="entry name" value="DEXDc"/>
    <property type="match status" value="1"/>
</dbReference>
<dbReference type="SMART" id="SM00488">
    <property type="entry name" value="DEXDc2"/>
    <property type="match status" value="1"/>
</dbReference>
<dbReference type="SMART" id="SM00491">
    <property type="entry name" value="HELICc2"/>
    <property type="match status" value="1"/>
</dbReference>
<dbReference type="SUPFAM" id="SSF52540">
    <property type="entry name" value="P-loop containing nucleoside triphosphate hydrolases"/>
    <property type="match status" value="2"/>
</dbReference>
<dbReference type="PROSITE" id="PS51193">
    <property type="entry name" value="HELICASE_ATP_BIND_2"/>
    <property type="match status" value="1"/>
</dbReference>
<organism>
    <name type="scientific">Xenopus laevis</name>
    <name type="common">African clawed frog</name>
    <dbReference type="NCBI Taxonomy" id="8355"/>
    <lineage>
        <taxon>Eukaryota</taxon>
        <taxon>Metazoa</taxon>
        <taxon>Chordata</taxon>
        <taxon>Craniata</taxon>
        <taxon>Vertebrata</taxon>
        <taxon>Euteleostomi</taxon>
        <taxon>Amphibia</taxon>
        <taxon>Batrachia</taxon>
        <taxon>Anura</taxon>
        <taxon>Pipoidea</taxon>
        <taxon>Pipidae</taxon>
        <taxon>Xenopodinae</taxon>
        <taxon>Xenopus</taxon>
        <taxon>Xenopus</taxon>
    </lineage>
</organism>
<gene>
    <name type="primary">brip1.L</name>
    <name evidence="7" type="synonym">fancj</name>
</gene>